<evidence type="ECO:0000255" key="1">
    <source>
        <dbReference type="HAMAP-Rule" id="MF_00260"/>
    </source>
</evidence>
<feature type="chain" id="PRO_1000047737" description="Porphobilinogen deaminase">
    <location>
        <begin position="1"/>
        <end position="329"/>
    </location>
</feature>
<feature type="modified residue" description="S-(dipyrrolylmethanemethyl)cysteine" evidence="1">
    <location>
        <position position="250"/>
    </location>
</feature>
<comment type="function">
    <text evidence="1">Tetrapolymerization of the monopyrrole PBG into the hydroxymethylbilane pre-uroporphyrinogen in several discrete steps.</text>
</comment>
<comment type="catalytic activity">
    <reaction evidence="1">
        <text>4 porphobilinogen + H2O = hydroxymethylbilane + 4 NH4(+)</text>
        <dbReference type="Rhea" id="RHEA:13185"/>
        <dbReference type="ChEBI" id="CHEBI:15377"/>
        <dbReference type="ChEBI" id="CHEBI:28938"/>
        <dbReference type="ChEBI" id="CHEBI:57845"/>
        <dbReference type="ChEBI" id="CHEBI:58126"/>
        <dbReference type="EC" id="2.5.1.61"/>
    </reaction>
</comment>
<comment type="cofactor">
    <cofactor evidence="1">
        <name>dipyrromethane</name>
        <dbReference type="ChEBI" id="CHEBI:60342"/>
    </cofactor>
    <text evidence="1">Binds 1 dipyrromethane group covalently.</text>
</comment>
<comment type="pathway">
    <text evidence="1">Porphyrin-containing compound metabolism; protoporphyrin-IX biosynthesis; coproporphyrinogen-III from 5-aminolevulinate: step 2/4.</text>
</comment>
<comment type="subunit">
    <text evidence="1">Monomer.</text>
</comment>
<comment type="miscellaneous">
    <text evidence="1">The porphobilinogen subunits are added to the dipyrromethane group.</text>
</comment>
<comment type="similarity">
    <text evidence="1">Belongs to the HMBS family.</text>
</comment>
<accession>A3MLK5</accession>
<keyword id="KW-0627">Porphyrin biosynthesis</keyword>
<keyword id="KW-0808">Transferase</keyword>
<name>HEM3_BURM7</name>
<sequence>MNSETLPAELPATLTIASRESRLAMWQAEHVRDALRKLYPACDVKILGMTTRGDQILDRTLSKVGGKGLFVKELESALADGRADLAVHSLKDVPMALPEGFALAAVMSREDPRDAFVSNDYASLDALPAGAVVGTSSLRREAMLRARHPRLDVRPLRGNLDTRLAKLDRGDYAAIILAAAGLKRLGLAARIRALLDVDDSLPAAGQGALGIEIAARRADVAAWLAPLHDHASALAVEAERAVSRALGGSCEVPLAAHAVWRGGELHLTGSVSTTDGARVLAAHAHARAATAADALALGRRVSDALERQGARAIVDALVAASAQAQKGGA</sequence>
<gene>
    <name evidence="1" type="primary">hemC</name>
    <name type="ordered locus">BMA10247_1597</name>
</gene>
<protein>
    <recommendedName>
        <fullName evidence="1">Porphobilinogen deaminase</fullName>
        <shortName evidence="1">PBG</shortName>
        <ecNumber evidence="1">2.5.1.61</ecNumber>
    </recommendedName>
    <alternativeName>
        <fullName evidence="1">Hydroxymethylbilane synthase</fullName>
        <shortName evidence="1">HMBS</shortName>
    </alternativeName>
    <alternativeName>
        <fullName evidence="1">Pre-uroporphyrinogen synthase</fullName>
    </alternativeName>
</protein>
<proteinExistence type="inferred from homology"/>
<organism>
    <name type="scientific">Burkholderia mallei (strain NCTC 10247)</name>
    <dbReference type="NCBI Taxonomy" id="320389"/>
    <lineage>
        <taxon>Bacteria</taxon>
        <taxon>Pseudomonadati</taxon>
        <taxon>Pseudomonadota</taxon>
        <taxon>Betaproteobacteria</taxon>
        <taxon>Burkholderiales</taxon>
        <taxon>Burkholderiaceae</taxon>
        <taxon>Burkholderia</taxon>
        <taxon>pseudomallei group</taxon>
    </lineage>
</organism>
<dbReference type="EC" id="2.5.1.61" evidence="1"/>
<dbReference type="EMBL" id="CP000548">
    <property type="protein sequence ID" value="ABO04983.1"/>
    <property type="molecule type" value="Genomic_DNA"/>
</dbReference>
<dbReference type="RefSeq" id="WP_004193185.1">
    <property type="nucleotide sequence ID" value="NZ_CP007802.1"/>
</dbReference>
<dbReference type="SMR" id="A3MLK5"/>
<dbReference type="GeneID" id="93059515"/>
<dbReference type="KEGG" id="bmaz:BM44_1574"/>
<dbReference type="KEGG" id="bmn:BMA10247_1597"/>
<dbReference type="PATRIC" id="fig|320389.8.peg.1758"/>
<dbReference type="UniPathway" id="UPA00251">
    <property type="reaction ID" value="UER00319"/>
</dbReference>
<dbReference type="GO" id="GO:0005737">
    <property type="term" value="C:cytoplasm"/>
    <property type="evidence" value="ECO:0007669"/>
    <property type="project" value="TreeGrafter"/>
</dbReference>
<dbReference type="GO" id="GO:0004418">
    <property type="term" value="F:hydroxymethylbilane synthase activity"/>
    <property type="evidence" value="ECO:0007669"/>
    <property type="project" value="UniProtKB-UniRule"/>
</dbReference>
<dbReference type="GO" id="GO:0006782">
    <property type="term" value="P:protoporphyrinogen IX biosynthetic process"/>
    <property type="evidence" value="ECO:0007669"/>
    <property type="project" value="UniProtKB-UniRule"/>
</dbReference>
<dbReference type="CDD" id="cd13646">
    <property type="entry name" value="PBP2_EcHMBS_like"/>
    <property type="match status" value="1"/>
</dbReference>
<dbReference type="FunFam" id="3.40.190.10:FF:000004">
    <property type="entry name" value="Porphobilinogen deaminase"/>
    <property type="match status" value="1"/>
</dbReference>
<dbReference type="FunFam" id="3.40.190.10:FF:000005">
    <property type="entry name" value="Porphobilinogen deaminase"/>
    <property type="match status" value="1"/>
</dbReference>
<dbReference type="Gene3D" id="3.40.190.10">
    <property type="entry name" value="Periplasmic binding protein-like II"/>
    <property type="match status" value="2"/>
</dbReference>
<dbReference type="Gene3D" id="3.30.160.40">
    <property type="entry name" value="Porphobilinogen deaminase, C-terminal domain"/>
    <property type="match status" value="1"/>
</dbReference>
<dbReference type="HAMAP" id="MF_00260">
    <property type="entry name" value="Porphobil_deam"/>
    <property type="match status" value="1"/>
</dbReference>
<dbReference type="InterPro" id="IPR000860">
    <property type="entry name" value="HemC"/>
</dbReference>
<dbReference type="InterPro" id="IPR022419">
    <property type="entry name" value="Porphobilin_deaminase_cofac_BS"/>
</dbReference>
<dbReference type="InterPro" id="IPR022417">
    <property type="entry name" value="Porphobilin_deaminase_N"/>
</dbReference>
<dbReference type="InterPro" id="IPR022418">
    <property type="entry name" value="Porphobilinogen_deaminase_C"/>
</dbReference>
<dbReference type="InterPro" id="IPR036803">
    <property type="entry name" value="Porphobilinogen_deaminase_C_sf"/>
</dbReference>
<dbReference type="NCBIfam" id="TIGR00212">
    <property type="entry name" value="hemC"/>
    <property type="match status" value="1"/>
</dbReference>
<dbReference type="PANTHER" id="PTHR11557">
    <property type="entry name" value="PORPHOBILINOGEN DEAMINASE"/>
    <property type="match status" value="1"/>
</dbReference>
<dbReference type="PANTHER" id="PTHR11557:SF0">
    <property type="entry name" value="PORPHOBILINOGEN DEAMINASE"/>
    <property type="match status" value="1"/>
</dbReference>
<dbReference type="Pfam" id="PF01379">
    <property type="entry name" value="Porphobil_deam"/>
    <property type="match status" value="1"/>
</dbReference>
<dbReference type="Pfam" id="PF03900">
    <property type="entry name" value="Porphobil_deamC"/>
    <property type="match status" value="1"/>
</dbReference>
<dbReference type="PIRSF" id="PIRSF001438">
    <property type="entry name" value="4pyrrol_synth_OHMeBilane_synth"/>
    <property type="match status" value="1"/>
</dbReference>
<dbReference type="PRINTS" id="PR00151">
    <property type="entry name" value="PORPHBDMNASE"/>
</dbReference>
<dbReference type="SUPFAM" id="SSF53850">
    <property type="entry name" value="Periplasmic binding protein-like II"/>
    <property type="match status" value="1"/>
</dbReference>
<dbReference type="SUPFAM" id="SSF54782">
    <property type="entry name" value="Porphobilinogen deaminase (hydroxymethylbilane synthase), C-terminal domain"/>
    <property type="match status" value="1"/>
</dbReference>
<dbReference type="PROSITE" id="PS00533">
    <property type="entry name" value="PORPHOBILINOGEN_DEAM"/>
    <property type="match status" value="1"/>
</dbReference>
<reference key="1">
    <citation type="journal article" date="2010" name="Genome Biol. Evol.">
        <title>Continuing evolution of Burkholderia mallei through genome reduction and large-scale rearrangements.</title>
        <authorList>
            <person name="Losada L."/>
            <person name="Ronning C.M."/>
            <person name="DeShazer D."/>
            <person name="Woods D."/>
            <person name="Fedorova N."/>
            <person name="Kim H.S."/>
            <person name="Shabalina S.A."/>
            <person name="Pearson T.R."/>
            <person name="Brinkac L."/>
            <person name="Tan P."/>
            <person name="Nandi T."/>
            <person name="Crabtree J."/>
            <person name="Badger J."/>
            <person name="Beckstrom-Sternberg S."/>
            <person name="Saqib M."/>
            <person name="Schutzer S.E."/>
            <person name="Keim P."/>
            <person name="Nierman W.C."/>
        </authorList>
    </citation>
    <scope>NUCLEOTIDE SEQUENCE [LARGE SCALE GENOMIC DNA]</scope>
    <source>
        <strain>NCTC 10247</strain>
    </source>
</reference>